<keyword id="KW-0041">Annexin</keyword>
<keyword id="KW-0084">Basement membrane</keyword>
<keyword id="KW-0106">Calcium</keyword>
<keyword id="KW-0111">Calcium/phospholipid-binding</keyword>
<keyword id="KW-0272">Extracellular matrix</keyword>
<keyword id="KW-0597">Phosphoprotein</keyword>
<keyword id="KW-1185">Reference proteome</keyword>
<keyword id="KW-0677">Repeat</keyword>
<keyword id="KW-0964">Secreted</keyword>
<proteinExistence type="evidence at transcript level"/>
<reference key="1">
    <citation type="journal article" date="1991" name="Gene">
        <title>Primary structure and expression of the Xenopus laevis gene encoding annexin II.</title>
        <authorList>
            <person name="Gerke V."/>
            <person name="Koch W."/>
            <person name="Thiel C."/>
        </authorList>
    </citation>
    <scope>NUCLEOTIDE SEQUENCE [MRNA]</scope>
    <source>
        <tissue>Kidney</tissue>
    </source>
</reference>
<reference key="2">
    <citation type="submission" date="2003-01" db="EMBL/GenBank/DDBJ databases">
        <authorList>
            <consortium name="NIH - Xenopus Gene Collection (XGC) project"/>
        </authorList>
    </citation>
    <scope>NUCLEOTIDE SEQUENCE [LARGE SCALE MRNA]</scope>
    <source>
        <tissue>Tail bud</tissue>
    </source>
</reference>
<gene>
    <name type="primary">anxa2-a</name>
</gene>
<name>ANX2A_XENLA</name>
<accession>P27006</accession>
<accession>Q5D0C8</accession>
<comment type="function">
    <text>Calcium-regulated membrane-binding protein whose affinity for calcium is greatly enhanced by anionic phospholipids. It binds two calcium ions with high affinity.</text>
</comment>
<comment type="subunit">
    <text>Tetramer of 2 light chains (p10 proteins) and 2 heavy chains (p36 proteins).</text>
</comment>
<comment type="subcellular location">
    <subcellularLocation>
        <location>Secreted</location>
        <location>Extracellular space</location>
        <location>Extracellular matrix</location>
        <location>Basement membrane</location>
    </subcellularLocation>
    <text>In the lamina beneath the plasma membrane.</text>
</comment>
<comment type="domain">
    <text>A pair of annexin repeats may form one binding site for calcium and phospholipid.</text>
</comment>
<comment type="miscellaneous">
    <text>It may cross-link plasma membrane phospholipids with actin and the cytoskeleton and be involved with exocytosis.</text>
</comment>
<comment type="similarity">
    <text evidence="3 4">Belongs to the annexin family.</text>
</comment>
<protein>
    <recommendedName>
        <fullName>Annexin A2-A</fullName>
    </recommendedName>
    <alternativeName>
        <fullName>Annexin II type I</fullName>
    </alternativeName>
    <alternativeName>
        <fullName>Annexin-2-A</fullName>
    </alternativeName>
    <alternativeName>
        <fullName>Calpactin I heavy chain</fullName>
    </alternativeName>
    <alternativeName>
        <fullName>Calpactin-1 heavy chain</fullName>
    </alternativeName>
    <alternativeName>
        <fullName>Lipocortin II</fullName>
    </alternativeName>
</protein>
<feature type="initiator methionine" description="Removed" evidence="1">
    <location>
        <position position="1"/>
    </location>
</feature>
<feature type="chain" id="PRO_0000067475" description="Annexin A2-A">
    <location>
        <begin position="2"/>
        <end position="340"/>
    </location>
</feature>
<feature type="repeat" description="Annexin 1" evidence="3">
    <location>
        <begin position="34"/>
        <end position="105"/>
    </location>
</feature>
<feature type="repeat" description="Annexin 2" evidence="3">
    <location>
        <begin position="106"/>
        <end position="177"/>
    </location>
</feature>
<feature type="repeat" description="Annexin 3" evidence="3">
    <location>
        <begin position="190"/>
        <end position="262"/>
    </location>
</feature>
<feature type="repeat" description="Annexin 4" evidence="3">
    <location>
        <begin position="266"/>
        <end position="337"/>
    </location>
</feature>
<feature type="region of interest" description="P10 binding site" evidence="2">
    <location>
        <begin position="2"/>
        <end position="25"/>
    </location>
</feature>
<sequence>MALIHEILGKLSLEGNQSCARQSALGTVKASTNFDAEKDAAAIETAIKTKGVDELTIINILTNRSNDQRQDIAFAYHRRTKKDLASALKGALSGNLETVMLGLIKTRPQYDASELKASMKGLGTDEDTLIEIICSRTNKELLDIQNAYRELYKTELEKDIVSDTSGDFRKLMVALAKGKRQEEGSVVDYEKIDQDARELYEAGVKRKGTDVGKWITIMTERSTPHLQKVFERYKSYSPYDMEESIKKEVKGDLENAFLNLVQCIQNKPLYFADRLYESMKGRGTKDKILIRTMVSRSELDMLKIRKEFKKKYGKSLHYFIGQDTKGDYQRALFNLCGGDD</sequence>
<organism>
    <name type="scientific">Xenopus laevis</name>
    <name type="common">African clawed frog</name>
    <dbReference type="NCBI Taxonomy" id="8355"/>
    <lineage>
        <taxon>Eukaryota</taxon>
        <taxon>Metazoa</taxon>
        <taxon>Chordata</taxon>
        <taxon>Craniata</taxon>
        <taxon>Vertebrata</taxon>
        <taxon>Euteleostomi</taxon>
        <taxon>Amphibia</taxon>
        <taxon>Batrachia</taxon>
        <taxon>Anura</taxon>
        <taxon>Pipoidea</taxon>
        <taxon>Pipidae</taxon>
        <taxon>Xenopodinae</taxon>
        <taxon>Xenopus</taxon>
        <taxon>Xenopus</taxon>
    </lineage>
</organism>
<evidence type="ECO:0000250" key="1"/>
<evidence type="ECO:0000255" key="2"/>
<evidence type="ECO:0000255" key="3">
    <source>
        <dbReference type="PROSITE-ProRule" id="PRU01245"/>
    </source>
</evidence>
<evidence type="ECO:0000305" key="4"/>
<dbReference type="EMBL" id="M60768">
    <property type="protein sequence ID" value="AAA49885.1"/>
    <property type="molecule type" value="mRNA"/>
</dbReference>
<dbReference type="EMBL" id="BC042238">
    <property type="protein sequence ID" value="AAH42238.1"/>
    <property type="molecule type" value="mRNA"/>
</dbReference>
<dbReference type="PIR" id="JQ1297">
    <property type="entry name" value="JQ1297"/>
</dbReference>
<dbReference type="RefSeq" id="NP_001081284.1">
    <property type="nucleotide sequence ID" value="NM_001087815.1"/>
</dbReference>
<dbReference type="SMR" id="P27006"/>
<dbReference type="BioGRID" id="99093">
    <property type="interactions" value="1"/>
</dbReference>
<dbReference type="DNASU" id="397754"/>
<dbReference type="GeneID" id="397754"/>
<dbReference type="KEGG" id="xla:397754"/>
<dbReference type="AGR" id="Xenbase:XB-GENE-6252603"/>
<dbReference type="CTD" id="397754"/>
<dbReference type="Xenbase" id="XB-GENE-6252603">
    <property type="gene designation" value="anxa2.S"/>
</dbReference>
<dbReference type="OMA" id="DLMRIRT"/>
<dbReference type="OrthoDB" id="37886at2759"/>
<dbReference type="Proteomes" id="UP000186698">
    <property type="component" value="Chromosome 3S"/>
</dbReference>
<dbReference type="Bgee" id="397754">
    <property type="expression patterns" value="Expressed in zone of skin and 19 other cell types or tissues"/>
</dbReference>
<dbReference type="GO" id="GO:0005604">
    <property type="term" value="C:basement membrane"/>
    <property type="evidence" value="ECO:0007669"/>
    <property type="project" value="UniProtKB-SubCell"/>
</dbReference>
<dbReference type="GO" id="GO:0005737">
    <property type="term" value="C:cytoplasm"/>
    <property type="evidence" value="ECO:0000318"/>
    <property type="project" value="GO_Central"/>
</dbReference>
<dbReference type="GO" id="GO:0005576">
    <property type="term" value="C:extracellular region"/>
    <property type="evidence" value="ECO:0007669"/>
    <property type="project" value="UniProtKB-KW"/>
</dbReference>
<dbReference type="GO" id="GO:0005634">
    <property type="term" value="C:nucleus"/>
    <property type="evidence" value="ECO:0000318"/>
    <property type="project" value="GO_Central"/>
</dbReference>
<dbReference type="GO" id="GO:0005886">
    <property type="term" value="C:plasma membrane"/>
    <property type="evidence" value="ECO:0000318"/>
    <property type="project" value="GO_Central"/>
</dbReference>
<dbReference type="GO" id="GO:0012506">
    <property type="term" value="C:vesicle membrane"/>
    <property type="evidence" value="ECO:0000318"/>
    <property type="project" value="GO_Central"/>
</dbReference>
<dbReference type="GO" id="GO:0005509">
    <property type="term" value="F:calcium ion binding"/>
    <property type="evidence" value="ECO:0007669"/>
    <property type="project" value="InterPro"/>
</dbReference>
<dbReference type="GO" id="GO:0005544">
    <property type="term" value="F:calcium-dependent phospholipid binding"/>
    <property type="evidence" value="ECO:0000318"/>
    <property type="project" value="GO_Central"/>
</dbReference>
<dbReference type="GO" id="GO:0008092">
    <property type="term" value="F:cytoskeletal protein binding"/>
    <property type="evidence" value="ECO:0007669"/>
    <property type="project" value="InterPro"/>
</dbReference>
<dbReference type="GO" id="GO:0001786">
    <property type="term" value="F:phosphatidylserine binding"/>
    <property type="evidence" value="ECO:0000318"/>
    <property type="project" value="GO_Central"/>
</dbReference>
<dbReference type="GO" id="GO:0004859">
    <property type="term" value="F:phospholipase inhibitor activity"/>
    <property type="evidence" value="ECO:0007669"/>
    <property type="project" value="InterPro"/>
</dbReference>
<dbReference type="GO" id="GO:1905602">
    <property type="term" value="P:positive regulation of receptor-mediated endocytosis involved in cholesterol transport"/>
    <property type="evidence" value="ECO:0000318"/>
    <property type="project" value="GO_Central"/>
</dbReference>
<dbReference type="FunFam" id="1.10.220.10:FF:000001">
    <property type="entry name" value="Annexin"/>
    <property type="match status" value="1"/>
</dbReference>
<dbReference type="FunFam" id="1.10.220.10:FF:000002">
    <property type="entry name" value="Annexin"/>
    <property type="match status" value="1"/>
</dbReference>
<dbReference type="FunFam" id="1.10.220.10:FF:000003">
    <property type="entry name" value="Annexin"/>
    <property type="match status" value="1"/>
</dbReference>
<dbReference type="FunFam" id="1.10.220.10:FF:000007">
    <property type="entry name" value="Annexin"/>
    <property type="match status" value="1"/>
</dbReference>
<dbReference type="Gene3D" id="1.10.220.10">
    <property type="entry name" value="Annexin"/>
    <property type="match status" value="4"/>
</dbReference>
<dbReference type="InterPro" id="IPR001464">
    <property type="entry name" value="Annexin"/>
</dbReference>
<dbReference type="InterPro" id="IPR018502">
    <property type="entry name" value="Annexin_repeat"/>
</dbReference>
<dbReference type="InterPro" id="IPR018252">
    <property type="entry name" value="Annexin_repeat_CS"/>
</dbReference>
<dbReference type="InterPro" id="IPR037104">
    <property type="entry name" value="Annexin_sf"/>
</dbReference>
<dbReference type="InterPro" id="IPR002389">
    <property type="entry name" value="ANX2"/>
</dbReference>
<dbReference type="PANTHER" id="PTHR10502">
    <property type="entry name" value="ANNEXIN"/>
    <property type="match status" value="1"/>
</dbReference>
<dbReference type="PANTHER" id="PTHR10502:SF18">
    <property type="entry name" value="ANNEXIN A2-RELATED"/>
    <property type="match status" value="1"/>
</dbReference>
<dbReference type="Pfam" id="PF00191">
    <property type="entry name" value="Annexin"/>
    <property type="match status" value="4"/>
</dbReference>
<dbReference type="PRINTS" id="PR00196">
    <property type="entry name" value="ANNEXIN"/>
</dbReference>
<dbReference type="PRINTS" id="PR00198">
    <property type="entry name" value="ANNEXINII"/>
</dbReference>
<dbReference type="SMART" id="SM00335">
    <property type="entry name" value="ANX"/>
    <property type="match status" value="4"/>
</dbReference>
<dbReference type="SUPFAM" id="SSF47874">
    <property type="entry name" value="Annexin"/>
    <property type="match status" value="1"/>
</dbReference>
<dbReference type="PROSITE" id="PS00223">
    <property type="entry name" value="ANNEXIN_1"/>
    <property type="match status" value="4"/>
</dbReference>
<dbReference type="PROSITE" id="PS51897">
    <property type="entry name" value="ANNEXIN_2"/>
    <property type="match status" value="4"/>
</dbReference>